<proteinExistence type="inferred from homology"/>
<keyword id="KW-0963">Cytoplasm</keyword>
<keyword id="KW-0275">Fatty acid biosynthesis</keyword>
<keyword id="KW-0276">Fatty acid metabolism</keyword>
<keyword id="KW-0444">Lipid biosynthesis</keyword>
<keyword id="KW-0443">Lipid metabolism</keyword>
<keyword id="KW-0596">Phosphopantetheine</keyword>
<keyword id="KW-0597">Phosphoprotein</keyword>
<dbReference type="EMBL" id="AL596170">
    <property type="protein sequence ID" value="CAC97150.1"/>
    <property type="molecule type" value="Genomic_DNA"/>
</dbReference>
<dbReference type="PIR" id="AF1672">
    <property type="entry name" value="AF1672"/>
</dbReference>
<dbReference type="RefSeq" id="WP_003723866.1">
    <property type="nucleotide sequence ID" value="NC_003212.1"/>
</dbReference>
<dbReference type="SMR" id="P63440"/>
<dbReference type="STRING" id="272626.gene:17566278"/>
<dbReference type="KEGG" id="lin:acpA"/>
<dbReference type="eggNOG" id="COG0236">
    <property type="taxonomic scope" value="Bacteria"/>
</dbReference>
<dbReference type="HOGENOM" id="CLU_108696_5_3_9"/>
<dbReference type="OrthoDB" id="9804551at2"/>
<dbReference type="UniPathway" id="UPA00094"/>
<dbReference type="Proteomes" id="UP000002513">
    <property type="component" value="Chromosome"/>
</dbReference>
<dbReference type="GO" id="GO:0005829">
    <property type="term" value="C:cytosol"/>
    <property type="evidence" value="ECO:0007669"/>
    <property type="project" value="TreeGrafter"/>
</dbReference>
<dbReference type="GO" id="GO:0016020">
    <property type="term" value="C:membrane"/>
    <property type="evidence" value="ECO:0007669"/>
    <property type="project" value="GOC"/>
</dbReference>
<dbReference type="GO" id="GO:0000035">
    <property type="term" value="F:acyl binding"/>
    <property type="evidence" value="ECO:0007669"/>
    <property type="project" value="TreeGrafter"/>
</dbReference>
<dbReference type="GO" id="GO:0000036">
    <property type="term" value="F:acyl carrier activity"/>
    <property type="evidence" value="ECO:0007669"/>
    <property type="project" value="UniProtKB-UniRule"/>
</dbReference>
<dbReference type="GO" id="GO:0009245">
    <property type="term" value="P:lipid A biosynthetic process"/>
    <property type="evidence" value="ECO:0007669"/>
    <property type="project" value="TreeGrafter"/>
</dbReference>
<dbReference type="FunFam" id="1.10.1200.10:FF:000001">
    <property type="entry name" value="Acyl carrier protein"/>
    <property type="match status" value="1"/>
</dbReference>
<dbReference type="Gene3D" id="1.10.1200.10">
    <property type="entry name" value="ACP-like"/>
    <property type="match status" value="1"/>
</dbReference>
<dbReference type="HAMAP" id="MF_01217">
    <property type="entry name" value="Acyl_carrier"/>
    <property type="match status" value="1"/>
</dbReference>
<dbReference type="InterPro" id="IPR003231">
    <property type="entry name" value="ACP"/>
</dbReference>
<dbReference type="InterPro" id="IPR036736">
    <property type="entry name" value="ACP-like_sf"/>
</dbReference>
<dbReference type="InterPro" id="IPR009081">
    <property type="entry name" value="PP-bd_ACP"/>
</dbReference>
<dbReference type="InterPro" id="IPR006162">
    <property type="entry name" value="Ppantetheine_attach_site"/>
</dbReference>
<dbReference type="NCBIfam" id="TIGR00517">
    <property type="entry name" value="acyl_carrier"/>
    <property type="match status" value="1"/>
</dbReference>
<dbReference type="NCBIfam" id="NF002148">
    <property type="entry name" value="PRK00982.1-2"/>
    <property type="match status" value="1"/>
</dbReference>
<dbReference type="NCBIfam" id="NF002150">
    <property type="entry name" value="PRK00982.1-4"/>
    <property type="match status" value="1"/>
</dbReference>
<dbReference type="NCBIfam" id="NF002151">
    <property type="entry name" value="PRK00982.1-5"/>
    <property type="match status" value="1"/>
</dbReference>
<dbReference type="PANTHER" id="PTHR20863">
    <property type="entry name" value="ACYL CARRIER PROTEIN"/>
    <property type="match status" value="1"/>
</dbReference>
<dbReference type="PANTHER" id="PTHR20863:SF76">
    <property type="entry name" value="CARRIER DOMAIN-CONTAINING PROTEIN"/>
    <property type="match status" value="1"/>
</dbReference>
<dbReference type="Pfam" id="PF00550">
    <property type="entry name" value="PP-binding"/>
    <property type="match status" value="1"/>
</dbReference>
<dbReference type="SUPFAM" id="SSF47336">
    <property type="entry name" value="ACP-like"/>
    <property type="match status" value="1"/>
</dbReference>
<dbReference type="PROSITE" id="PS50075">
    <property type="entry name" value="CARRIER"/>
    <property type="match status" value="1"/>
</dbReference>
<dbReference type="PROSITE" id="PS00012">
    <property type="entry name" value="PHOSPHOPANTETHEINE"/>
    <property type="match status" value="1"/>
</dbReference>
<feature type="chain" id="PRO_0000180150" description="Acyl carrier protein">
    <location>
        <begin position="1"/>
        <end position="77"/>
    </location>
</feature>
<feature type="domain" description="Carrier" evidence="2">
    <location>
        <begin position="2"/>
        <end position="77"/>
    </location>
</feature>
<feature type="modified residue" description="O-(pantetheine 4'-phosphoryl)serine" evidence="2">
    <location>
        <position position="37"/>
    </location>
</feature>
<protein>
    <recommendedName>
        <fullName evidence="1">Acyl carrier protein</fullName>
        <shortName evidence="1">ACP</shortName>
    </recommendedName>
</protein>
<evidence type="ECO:0000255" key="1">
    <source>
        <dbReference type="HAMAP-Rule" id="MF_01217"/>
    </source>
</evidence>
<evidence type="ECO:0000255" key="2">
    <source>
        <dbReference type="PROSITE-ProRule" id="PRU00258"/>
    </source>
</evidence>
<name>ACP_LISIN</name>
<sequence>MAEVLEKVTKIIVDRLGVEESKVTLEASFKEDLGADSLDVVELVMELEDEFGVEISDGDAENINTVGDAVKYIEANA</sequence>
<accession>P63440</accession>
<accession>Q92AK2</accession>
<organism>
    <name type="scientific">Listeria innocua serovar 6a (strain ATCC BAA-680 / CLIP 11262)</name>
    <dbReference type="NCBI Taxonomy" id="272626"/>
    <lineage>
        <taxon>Bacteria</taxon>
        <taxon>Bacillati</taxon>
        <taxon>Bacillota</taxon>
        <taxon>Bacilli</taxon>
        <taxon>Bacillales</taxon>
        <taxon>Listeriaceae</taxon>
        <taxon>Listeria</taxon>
    </lineage>
</organism>
<comment type="function">
    <text evidence="1">Carrier of the growing fatty acid chain in fatty acid biosynthesis.</text>
</comment>
<comment type="pathway">
    <text evidence="1">Lipid metabolism; fatty acid biosynthesis.</text>
</comment>
<comment type="subcellular location">
    <subcellularLocation>
        <location evidence="1">Cytoplasm</location>
    </subcellularLocation>
</comment>
<comment type="PTM">
    <text evidence="1">4'-phosphopantetheine is transferred from CoA to a specific serine of apo-ACP by AcpS. This modification is essential for activity because fatty acids are bound in thioester linkage to the sulfhydryl of the prosthetic group.</text>
</comment>
<comment type="similarity">
    <text evidence="1">Belongs to the acyl carrier protein (ACP) family.</text>
</comment>
<gene>
    <name evidence="1" type="primary">acpP</name>
    <name type="synonym">acpA</name>
    <name type="ordered locus">lin1920</name>
</gene>
<reference key="1">
    <citation type="journal article" date="2001" name="Science">
        <title>Comparative genomics of Listeria species.</title>
        <authorList>
            <person name="Glaser P."/>
            <person name="Frangeul L."/>
            <person name="Buchrieser C."/>
            <person name="Rusniok C."/>
            <person name="Amend A."/>
            <person name="Baquero F."/>
            <person name="Berche P."/>
            <person name="Bloecker H."/>
            <person name="Brandt P."/>
            <person name="Chakraborty T."/>
            <person name="Charbit A."/>
            <person name="Chetouani F."/>
            <person name="Couve E."/>
            <person name="de Daruvar A."/>
            <person name="Dehoux P."/>
            <person name="Domann E."/>
            <person name="Dominguez-Bernal G."/>
            <person name="Duchaud E."/>
            <person name="Durant L."/>
            <person name="Dussurget O."/>
            <person name="Entian K.-D."/>
            <person name="Fsihi H."/>
            <person name="Garcia-del Portillo F."/>
            <person name="Garrido P."/>
            <person name="Gautier L."/>
            <person name="Goebel W."/>
            <person name="Gomez-Lopez N."/>
            <person name="Hain T."/>
            <person name="Hauf J."/>
            <person name="Jackson D."/>
            <person name="Jones L.-M."/>
            <person name="Kaerst U."/>
            <person name="Kreft J."/>
            <person name="Kuhn M."/>
            <person name="Kunst F."/>
            <person name="Kurapkat G."/>
            <person name="Madueno E."/>
            <person name="Maitournam A."/>
            <person name="Mata Vicente J."/>
            <person name="Ng E."/>
            <person name="Nedjari H."/>
            <person name="Nordsiek G."/>
            <person name="Novella S."/>
            <person name="de Pablos B."/>
            <person name="Perez-Diaz J.-C."/>
            <person name="Purcell R."/>
            <person name="Remmel B."/>
            <person name="Rose M."/>
            <person name="Schlueter T."/>
            <person name="Simoes N."/>
            <person name="Tierrez A."/>
            <person name="Vazquez-Boland J.-A."/>
            <person name="Voss H."/>
            <person name="Wehland J."/>
            <person name="Cossart P."/>
        </authorList>
    </citation>
    <scope>NUCLEOTIDE SEQUENCE [LARGE SCALE GENOMIC DNA]</scope>
    <source>
        <strain>ATCC BAA-680 / CLIP 11262</strain>
    </source>
</reference>